<protein>
    <recommendedName>
        <fullName evidence="1">Uracil-DNA glycosylase</fullName>
        <shortName evidence="1">UDG</shortName>
        <ecNumber evidence="1">3.2.2.27</ecNumber>
    </recommendedName>
</protein>
<sequence>MAIKLENIKIEKSWKEVLKGEFLSPYFLEIKEKLVCLKNSGVTIYPPGNLIFNAFNLTPFDKVKVVILGQDPYHEVNQAMGLSFSVPKDVRIPPSLINIFKEINSDLGINEPNCGDLTFWAKQGVLLLNASLSVSAKIANSHKNFGWQIFTDAVIKTLSQKRENIVFMLWGNFAKAKATLIDAKKHLILTAAHPSPLAGGAFFGCKHFSKCNNFLISRGISPINWDLNYTDNQPF</sequence>
<gene>
    <name evidence="1" type="primary">ung</name>
    <name type="ordered locus">CHAB381_0347</name>
</gene>
<name>UNG_CAMHC</name>
<dbReference type="EC" id="3.2.2.27" evidence="1"/>
<dbReference type="EMBL" id="CP000776">
    <property type="protein sequence ID" value="ABS52057.1"/>
    <property type="molecule type" value="Genomic_DNA"/>
</dbReference>
<dbReference type="RefSeq" id="WP_012108231.1">
    <property type="nucleotide sequence ID" value="NC_009714.1"/>
</dbReference>
<dbReference type="SMR" id="A7I0A8"/>
<dbReference type="STRING" id="360107.CHAB381_0347"/>
<dbReference type="KEGG" id="cha:CHAB381_0347"/>
<dbReference type="eggNOG" id="COG0692">
    <property type="taxonomic scope" value="Bacteria"/>
</dbReference>
<dbReference type="HOGENOM" id="CLU_032162_3_0_7"/>
<dbReference type="OrthoDB" id="9804372at2"/>
<dbReference type="Proteomes" id="UP000002407">
    <property type="component" value="Chromosome"/>
</dbReference>
<dbReference type="GO" id="GO:0005737">
    <property type="term" value="C:cytoplasm"/>
    <property type="evidence" value="ECO:0007669"/>
    <property type="project" value="UniProtKB-SubCell"/>
</dbReference>
<dbReference type="GO" id="GO:0004844">
    <property type="term" value="F:uracil DNA N-glycosylase activity"/>
    <property type="evidence" value="ECO:0007669"/>
    <property type="project" value="UniProtKB-UniRule"/>
</dbReference>
<dbReference type="GO" id="GO:0097510">
    <property type="term" value="P:base-excision repair, AP site formation via deaminated base removal"/>
    <property type="evidence" value="ECO:0007669"/>
    <property type="project" value="TreeGrafter"/>
</dbReference>
<dbReference type="CDD" id="cd10027">
    <property type="entry name" value="UDG-F1-like"/>
    <property type="match status" value="1"/>
</dbReference>
<dbReference type="FunFam" id="3.40.470.10:FF:000001">
    <property type="entry name" value="Uracil-DNA glycosylase"/>
    <property type="match status" value="1"/>
</dbReference>
<dbReference type="Gene3D" id="3.40.470.10">
    <property type="entry name" value="Uracil-DNA glycosylase-like domain"/>
    <property type="match status" value="1"/>
</dbReference>
<dbReference type="HAMAP" id="MF_00148">
    <property type="entry name" value="UDG"/>
    <property type="match status" value="1"/>
</dbReference>
<dbReference type="InterPro" id="IPR002043">
    <property type="entry name" value="UDG_fam1"/>
</dbReference>
<dbReference type="InterPro" id="IPR018085">
    <property type="entry name" value="Ura-DNA_Glyclase_AS"/>
</dbReference>
<dbReference type="InterPro" id="IPR005122">
    <property type="entry name" value="Uracil-DNA_glycosylase-like"/>
</dbReference>
<dbReference type="InterPro" id="IPR036895">
    <property type="entry name" value="Uracil-DNA_glycosylase-like_sf"/>
</dbReference>
<dbReference type="NCBIfam" id="NF003588">
    <property type="entry name" value="PRK05254.1-1"/>
    <property type="match status" value="1"/>
</dbReference>
<dbReference type="NCBIfam" id="NF003589">
    <property type="entry name" value="PRK05254.1-2"/>
    <property type="match status" value="1"/>
</dbReference>
<dbReference type="NCBIfam" id="NF003591">
    <property type="entry name" value="PRK05254.1-4"/>
    <property type="match status" value="1"/>
</dbReference>
<dbReference type="NCBIfam" id="NF003592">
    <property type="entry name" value="PRK05254.1-5"/>
    <property type="match status" value="1"/>
</dbReference>
<dbReference type="NCBIfam" id="TIGR00628">
    <property type="entry name" value="ung"/>
    <property type="match status" value="1"/>
</dbReference>
<dbReference type="PANTHER" id="PTHR11264">
    <property type="entry name" value="URACIL-DNA GLYCOSYLASE"/>
    <property type="match status" value="1"/>
</dbReference>
<dbReference type="PANTHER" id="PTHR11264:SF0">
    <property type="entry name" value="URACIL-DNA GLYCOSYLASE"/>
    <property type="match status" value="1"/>
</dbReference>
<dbReference type="Pfam" id="PF03167">
    <property type="entry name" value="UDG"/>
    <property type="match status" value="1"/>
</dbReference>
<dbReference type="SMART" id="SM00986">
    <property type="entry name" value="UDG"/>
    <property type="match status" value="1"/>
</dbReference>
<dbReference type="SMART" id="SM00987">
    <property type="entry name" value="UreE_C"/>
    <property type="match status" value="1"/>
</dbReference>
<dbReference type="SUPFAM" id="SSF52141">
    <property type="entry name" value="Uracil-DNA glycosylase-like"/>
    <property type="match status" value="1"/>
</dbReference>
<dbReference type="PROSITE" id="PS00130">
    <property type="entry name" value="U_DNA_GLYCOSYLASE"/>
    <property type="match status" value="1"/>
</dbReference>
<proteinExistence type="inferred from homology"/>
<feature type="chain" id="PRO_1000009874" description="Uracil-DNA glycosylase">
    <location>
        <begin position="1"/>
        <end position="235"/>
    </location>
</feature>
<feature type="active site" description="Proton acceptor" evidence="1">
    <location>
        <position position="71"/>
    </location>
</feature>
<accession>A7I0A8</accession>
<reference key="1">
    <citation type="submission" date="2007-07" db="EMBL/GenBank/DDBJ databases">
        <title>Complete genome sequence of Campylobacter hominis ATCC BAA-381, a commensal isolated from the human gastrointestinal tract.</title>
        <authorList>
            <person name="Fouts D.E."/>
            <person name="Mongodin E.F."/>
            <person name="Puiu D."/>
            <person name="Sebastian Y."/>
            <person name="Miller W.G."/>
            <person name="Mandrell R.E."/>
            <person name="Nelson K.E."/>
        </authorList>
    </citation>
    <scope>NUCLEOTIDE SEQUENCE [LARGE SCALE GENOMIC DNA]</scope>
    <source>
        <strain>ATCC BAA-381 / DSM 21671 / CCUG 45161 / LMG 19568 / NCTC 13146 / CH001A</strain>
    </source>
</reference>
<comment type="function">
    <text evidence="1">Excises uracil residues from the DNA which can arise as a result of misincorporation of dUMP residues by DNA polymerase or due to deamination of cytosine.</text>
</comment>
<comment type="catalytic activity">
    <reaction evidence="1">
        <text>Hydrolyzes single-stranded DNA or mismatched double-stranded DNA and polynucleotides, releasing free uracil.</text>
        <dbReference type="EC" id="3.2.2.27"/>
    </reaction>
</comment>
<comment type="subcellular location">
    <subcellularLocation>
        <location evidence="1">Cytoplasm</location>
    </subcellularLocation>
</comment>
<comment type="similarity">
    <text evidence="1">Belongs to the uracil-DNA glycosylase (UDG) superfamily. UNG family.</text>
</comment>
<organism>
    <name type="scientific">Campylobacter hominis (strain ATCC BAA-381 / DSM 21671 / CCUG 45161 / LMG 19568 / NCTC 13146 / CH001A)</name>
    <dbReference type="NCBI Taxonomy" id="360107"/>
    <lineage>
        <taxon>Bacteria</taxon>
        <taxon>Pseudomonadati</taxon>
        <taxon>Campylobacterota</taxon>
        <taxon>Epsilonproteobacteria</taxon>
        <taxon>Campylobacterales</taxon>
        <taxon>Campylobacteraceae</taxon>
        <taxon>Campylobacter</taxon>
    </lineage>
</organism>
<keyword id="KW-0963">Cytoplasm</keyword>
<keyword id="KW-0227">DNA damage</keyword>
<keyword id="KW-0234">DNA repair</keyword>
<keyword id="KW-0378">Hydrolase</keyword>
<keyword id="KW-1185">Reference proteome</keyword>
<evidence type="ECO:0000255" key="1">
    <source>
        <dbReference type="HAMAP-Rule" id="MF_00148"/>
    </source>
</evidence>